<sequence>MTQEVPRRLEPSPFEWKGDAGPSVKTLRPHAIPSVAIDLASVTKSYGDKPVVDGLSFTVAAGECFGLLGPNGAGKSTITRMILGMTTPATGVITVLGVPVPSRARLARMGIGVVPQFDNLDSEFTVRENLLVFGRYFRMSTREIEAVIPSLLEFARLENKVDARVSDLSGGMKRRLTLARALINDPQLLILDEPTTGLDPHARHLIWERLRSLLARGKTILLTTHIMEEAERLCDRLCVLEAGRKIAEGRPHVLIDEKIGCQVIEIYGGNPHELSALVSPHARHVEVSGETVFCYALDPEQVRVQLDGCAGVRFLQRPPNLEDVFLRLTGRELKD</sequence>
<geneLocation type="plasmid">
    <name>megaplasmid</name>
</geneLocation>
<gene>
    <name evidence="1" type="primary">nodI</name>
</gene>
<dbReference type="EC" id="7.6.2.-" evidence="1"/>
<dbReference type="EMBL" id="AF522456">
    <property type="protein sequence ID" value="AAN62904.1"/>
    <property type="molecule type" value="Genomic_DNA"/>
</dbReference>
<dbReference type="SMR" id="Q8GNH6"/>
<dbReference type="GO" id="GO:0005886">
    <property type="term" value="C:plasma membrane"/>
    <property type="evidence" value="ECO:0007669"/>
    <property type="project" value="UniProtKB-SubCell"/>
</dbReference>
<dbReference type="GO" id="GO:0005524">
    <property type="term" value="F:ATP binding"/>
    <property type="evidence" value="ECO:0007669"/>
    <property type="project" value="UniProtKB-KW"/>
</dbReference>
<dbReference type="GO" id="GO:0016887">
    <property type="term" value="F:ATP hydrolysis activity"/>
    <property type="evidence" value="ECO:0007669"/>
    <property type="project" value="InterPro"/>
</dbReference>
<dbReference type="GO" id="GO:0022857">
    <property type="term" value="F:transmembrane transporter activity"/>
    <property type="evidence" value="ECO:0007669"/>
    <property type="project" value="InterPro"/>
</dbReference>
<dbReference type="CDD" id="cd03263">
    <property type="entry name" value="ABC_subfamily_A"/>
    <property type="match status" value="1"/>
</dbReference>
<dbReference type="FunFam" id="3.40.50.300:FF:000589">
    <property type="entry name" value="ABC transporter, ATP-binding subunit"/>
    <property type="match status" value="1"/>
</dbReference>
<dbReference type="Gene3D" id="3.40.50.300">
    <property type="entry name" value="P-loop containing nucleotide triphosphate hydrolases"/>
    <property type="match status" value="1"/>
</dbReference>
<dbReference type="InterPro" id="IPR003593">
    <property type="entry name" value="AAA+_ATPase"/>
</dbReference>
<dbReference type="InterPro" id="IPR003439">
    <property type="entry name" value="ABC_transporter-like_ATP-bd"/>
</dbReference>
<dbReference type="InterPro" id="IPR017871">
    <property type="entry name" value="ABC_transporter-like_CS"/>
</dbReference>
<dbReference type="InterPro" id="IPR050763">
    <property type="entry name" value="ABC_transporter_ATP-binding"/>
</dbReference>
<dbReference type="InterPro" id="IPR005978">
    <property type="entry name" value="ABC_transptNodI"/>
</dbReference>
<dbReference type="InterPro" id="IPR027417">
    <property type="entry name" value="P-loop_NTPase"/>
</dbReference>
<dbReference type="NCBIfam" id="TIGR01288">
    <property type="entry name" value="nodI"/>
    <property type="match status" value="1"/>
</dbReference>
<dbReference type="NCBIfam" id="NF010059">
    <property type="entry name" value="PRK13536.1"/>
    <property type="match status" value="1"/>
</dbReference>
<dbReference type="PANTHER" id="PTHR42711">
    <property type="entry name" value="ABC TRANSPORTER ATP-BINDING PROTEIN"/>
    <property type="match status" value="1"/>
</dbReference>
<dbReference type="PANTHER" id="PTHR42711:SF5">
    <property type="entry name" value="ABC TRANSPORTER ATP-BINDING PROTEIN NATA"/>
    <property type="match status" value="1"/>
</dbReference>
<dbReference type="Pfam" id="PF00005">
    <property type="entry name" value="ABC_tran"/>
    <property type="match status" value="1"/>
</dbReference>
<dbReference type="SMART" id="SM00382">
    <property type="entry name" value="AAA"/>
    <property type="match status" value="1"/>
</dbReference>
<dbReference type="SUPFAM" id="SSF52540">
    <property type="entry name" value="P-loop containing nucleoside triphosphate hydrolases"/>
    <property type="match status" value="1"/>
</dbReference>
<dbReference type="PROSITE" id="PS00211">
    <property type="entry name" value="ABC_TRANSPORTER_1"/>
    <property type="match status" value="1"/>
</dbReference>
<dbReference type="PROSITE" id="PS50893">
    <property type="entry name" value="ABC_TRANSPORTER_2"/>
    <property type="match status" value="1"/>
</dbReference>
<dbReference type="PROSITE" id="PS51240">
    <property type="entry name" value="NODI"/>
    <property type="match status" value="1"/>
</dbReference>
<comment type="function">
    <text evidence="1">Part of the ABC transporter complex NodIJ involved in the export of the nodulation factors (Nod factors), the bacterial signal molecules that induce symbiosis and subsequent nodulation induction. Nod factors are LCO (lipo-chitin oligosaccharide), a modified beta-1,4-linked N-acetylglucosamine oligosaccharide. This subunit is responsible for energy coupling to the transport system.</text>
</comment>
<comment type="subunit">
    <text evidence="1">The complex is composed of two ATP-binding proteins (NodI) and two transmembrane proteins (NodJ).</text>
</comment>
<comment type="subcellular location">
    <subcellularLocation>
        <location evidence="1">Cell inner membrane</location>
        <topology evidence="1">Peripheral membrane protein</topology>
    </subcellularLocation>
</comment>
<comment type="similarity">
    <text evidence="1">Belongs to the ABC transporter superfamily. Lipooligosaccharide exporter (TC 3.A.1.102) family.</text>
</comment>
<evidence type="ECO:0000255" key="1">
    <source>
        <dbReference type="HAMAP-Rule" id="MF_01704"/>
    </source>
</evidence>
<evidence type="ECO:0000256" key="2">
    <source>
        <dbReference type="SAM" id="MobiDB-lite"/>
    </source>
</evidence>
<feature type="chain" id="PRO_0000092642" description="Nod factor export ATP-binding protein I">
    <location>
        <begin position="1"/>
        <end position="335"/>
    </location>
</feature>
<feature type="domain" description="ABC transporter" evidence="1">
    <location>
        <begin position="37"/>
        <end position="267"/>
    </location>
</feature>
<feature type="region of interest" description="Disordered" evidence="2">
    <location>
        <begin position="1"/>
        <end position="22"/>
    </location>
</feature>
<feature type="compositionally biased region" description="Basic and acidic residues" evidence="2">
    <location>
        <begin position="1"/>
        <end position="10"/>
    </location>
</feature>
<feature type="binding site" evidence="1">
    <location>
        <begin position="69"/>
        <end position="76"/>
    </location>
    <ligand>
        <name>ATP</name>
        <dbReference type="ChEBI" id="CHEBI:30616"/>
    </ligand>
</feature>
<name>NODI_RHIML</name>
<reference key="1">
    <citation type="journal article" date="2002" name="Can. J. Microbiol.">
        <title>Identification and cloning of the bacterial nodulation specificity gene in the Sinorhizobium meliloti-Medicago laciniata symbiosis.</title>
        <authorList>
            <person name="Barran L.R."/>
            <person name="Bromfield E.S."/>
            <person name="Brown D.C."/>
        </authorList>
    </citation>
    <scope>NUCLEOTIDE SEQUENCE [GENOMIC DNA]</scope>
    <source>
        <strain>102L4</strain>
    </source>
</reference>
<organism>
    <name type="scientific">Rhizobium meliloti</name>
    <name type="common">Ensifer meliloti</name>
    <name type="synonym">Sinorhizobium meliloti</name>
    <dbReference type="NCBI Taxonomy" id="382"/>
    <lineage>
        <taxon>Bacteria</taxon>
        <taxon>Pseudomonadati</taxon>
        <taxon>Pseudomonadota</taxon>
        <taxon>Alphaproteobacteria</taxon>
        <taxon>Hyphomicrobiales</taxon>
        <taxon>Rhizobiaceae</taxon>
        <taxon>Sinorhizobium/Ensifer group</taxon>
        <taxon>Sinorhizobium</taxon>
    </lineage>
</organism>
<accession>Q8GNH6</accession>
<protein>
    <recommendedName>
        <fullName evidence="1">Nod factor export ATP-binding protein I</fullName>
        <ecNumber evidence="1">7.6.2.-</ecNumber>
    </recommendedName>
    <alternativeName>
        <fullName evidence="1">Nodulation ATP-binding protein I</fullName>
    </alternativeName>
</protein>
<proteinExistence type="inferred from homology"/>
<keyword id="KW-0067">ATP-binding</keyword>
<keyword id="KW-0997">Cell inner membrane</keyword>
<keyword id="KW-1003">Cell membrane</keyword>
<keyword id="KW-0472">Membrane</keyword>
<keyword id="KW-0536">Nodulation</keyword>
<keyword id="KW-0547">Nucleotide-binding</keyword>
<keyword id="KW-0614">Plasmid</keyword>
<keyword id="KW-1278">Translocase</keyword>
<keyword id="KW-0813">Transport</keyword>